<comment type="function">
    <text evidence="1">Part of ribonuclease P, a protein complex that generates mature tRNA molecules by cleaving their 5'-ends.</text>
</comment>
<comment type="catalytic activity">
    <reaction evidence="1">
        <text>Endonucleolytic cleavage of RNA, removing 5'-extranucleotides from tRNA precursor.</text>
        <dbReference type="EC" id="3.1.26.5"/>
    </reaction>
</comment>
<comment type="subunit">
    <text evidence="1">Consists of a catalytic RNA component and at least 4-5 protein subunits.</text>
</comment>
<comment type="subcellular location">
    <subcellularLocation>
        <location evidence="1">Cytoplasm</location>
    </subcellularLocation>
</comment>
<comment type="similarity">
    <text evidence="1">Belongs to the eukaryotic/archaeal RNase P protein component 1 family.</text>
</comment>
<gene>
    <name evidence="1" type="primary">rnp1</name>
    <name type="ordered locus">Msp_0900</name>
</gene>
<reference key="1">
    <citation type="journal article" date="2006" name="J. Bacteriol.">
        <title>The genome sequence of Methanosphaera stadtmanae reveals why this human intestinal archaeon is restricted to methanol and H2 for methane formation and ATP synthesis.</title>
        <authorList>
            <person name="Fricke W.F."/>
            <person name="Seedorf H."/>
            <person name="Henne A."/>
            <person name="Kruer M."/>
            <person name="Liesegang H."/>
            <person name="Hedderich R."/>
            <person name="Gottschalk G."/>
            <person name="Thauer R.K."/>
        </authorList>
    </citation>
    <scope>NUCLEOTIDE SEQUENCE [LARGE SCALE GENOMIC DNA]</scope>
    <source>
        <strain>ATCC 43021 / DSM 3091 / JCM 11832 / MCB-3</strain>
    </source>
</reference>
<feature type="chain" id="PRO_1000046616" description="Ribonuclease P protein component 1">
    <location>
        <begin position="1"/>
        <end position="93"/>
    </location>
</feature>
<proteinExistence type="inferred from homology"/>
<sequence>MITPQNVFRHEFIGLNVEVINSKHEKFIGIKGIIIDETRNTIRVDTGKNEKLIPKSDVVFLFTLPQGEKVSIDGKVITARPEDRIKKKFTKIR</sequence>
<protein>
    <recommendedName>
        <fullName evidence="1">Ribonuclease P protein component 1</fullName>
        <shortName evidence="1">RNase P component 1</shortName>
        <ecNumber evidence="1">3.1.26.5</ecNumber>
    </recommendedName>
    <alternativeName>
        <fullName evidence="1">Rpp29</fullName>
    </alternativeName>
</protein>
<organism>
    <name type="scientific">Methanosphaera stadtmanae (strain ATCC 43021 / DSM 3091 / JCM 11832 / MCB-3)</name>
    <dbReference type="NCBI Taxonomy" id="339860"/>
    <lineage>
        <taxon>Archaea</taxon>
        <taxon>Methanobacteriati</taxon>
        <taxon>Methanobacteriota</taxon>
        <taxon>Methanomada group</taxon>
        <taxon>Methanobacteria</taxon>
        <taxon>Methanobacteriales</taxon>
        <taxon>Methanobacteriaceae</taxon>
        <taxon>Methanosphaera</taxon>
    </lineage>
</organism>
<evidence type="ECO:0000255" key="1">
    <source>
        <dbReference type="HAMAP-Rule" id="MF_00754"/>
    </source>
</evidence>
<accession>Q2NFW5</accession>
<keyword id="KW-0963">Cytoplasm</keyword>
<keyword id="KW-0255">Endonuclease</keyword>
<keyword id="KW-0378">Hydrolase</keyword>
<keyword id="KW-0540">Nuclease</keyword>
<keyword id="KW-1185">Reference proteome</keyword>
<keyword id="KW-0819">tRNA processing</keyword>
<name>RNP1_METST</name>
<dbReference type="EC" id="3.1.26.5" evidence="1"/>
<dbReference type="EMBL" id="CP000102">
    <property type="protein sequence ID" value="ABC57288.1"/>
    <property type="molecule type" value="Genomic_DNA"/>
</dbReference>
<dbReference type="RefSeq" id="WP_011406487.1">
    <property type="nucleotide sequence ID" value="NC_007681.1"/>
</dbReference>
<dbReference type="SMR" id="Q2NFW5"/>
<dbReference type="STRING" id="339860.Msp_0900"/>
<dbReference type="GeneID" id="41325475"/>
<dbReference type="KEGG" id="mst:Msp_0900"/>
<dbReference type="eggNOG" id="arCOG00784">
    <property type="taxonomic scope" value="Archaea"/>
</dbReference>
<dbReference type="HOGENOM" id="CLU_107020_2_1_2"/>
<dbReference type="OrthoDB" id="39019at2157"/>
<dbReference type="Proteomes" id="UP000001931">
    <property type="component" value="Chromosome"/>
</dbReference>
<dbReference type="GO" id="GO:0005737">
    <property type="term" value="C:cytoplasm"/>
    <property type="evidence" value="ECO:0007669"/>
    <property type="project" value="UniProtKB-SubCell"/>
</dbReference>
<dbReference type="GO" id="GO:0000172">
    <property type="term" value="C:ribonuclease MRP complex"/>
    <property type="evidence" value="ECO:0007669"/>
    <property type="project" value="InterPro"/>
</dbReference>
<dbReference type="GO" id="GO:0030677">
    <property type="term" value="C:ribonuclease P complex"/>
    <property type="evidence" value="ECO:0007669"/>
    <property type="project" value="UniProtKB-UniRule"/>
</dbReference>
<dbReference type="GO" id="GO:0004526">
    <property type="term" value="F:ribonuclease P activity"/>
    <property type="evidence" value="ECO:0007669"/>
    <property type="project" value="UniProtKB-UniRule"/>
</dbReference>
<dbReference type="GO" id="GO:0033204">
    <property type="term" value="F:ribonuclease P RNA binding"/>
    <property type="evidence" value="ECO:0007669"/>
    <property type="project" value="InterPro"/>
</dbReference>
<dbReference type="GO" id="GO:0006364">
    <property type="term" value="P:rRNA processing"/>
    <property type="evidence" value="ECO:0007669"/>
    <property type="project" value="TreeGrafter"/>
</dbReference>
<dbReference type="GO" id="GO:0001682">
    <property type="term" value="P:tRNA 5'-leader removal"/>
    <property type="evidence" value="ECO:0007669"/>
    <property type="project" value="UniProtKB-UniRule"/>
</dbReference>
<dbReference type="Gene3D" id="2.30.30.210">
    <property type="entry name" value="Ribonuclease P/MRP, subunit p29"/>
    <property type="match status" value="1"/>
</dbReference>
<dbReference type="HAMAP" id="MF_00754">
    <property type="entry name" value="RNase_P_1"/>
    <property type="match status" value="1"/>
</dbReference>
<dbReference type="InterPro" id="IPR016848">
    <property type="entry name" value="RNase_P/MRP_Rpp29-subunit"/>
</dbReference>
<dbReference type="InterPro" id="IPR036980">
    <property type="entry name" value="RNase_P/MRP_Rpp29_sf"/>
</dbReference>
<dbReference type="InterPro" id="IPR023538">
    <property type="entry name" value="RNP1"/>
</dbReference>
<dbReference type="InterPro" id="IPR023534">
    <property type="entry name" value="Rof/RNase_P-like"/>
</dbReference>
<dbReference type="InterPro" id="IPR002730">
    <property type="entry name" value="Rpp29/RNP1"/>
</dbReference>
<dbReference type="NCBIfam" id="NF046110">
    <property type="entry name" value="RNaseP1Mthb"/>
    <property type="match status" value="1"/>
</dbReference>
<dbReference type="PANTHER" id="PTHR13348:SF0">
    <property type="entry name" value="RIBONUCLEASE P PROTEIN SUBUNIT P29"/>
    <property type="match status" value="1"/>
</dbReference>
<dbReference type="PANTHER" id="PTHR13348">
    <property type="entry name" value="RIBONUCLEASE P SUBUNIT P29"/>
    <property type="match status" value="1"/>
</dbReference>
<dbReference type="Pfam" id="PF01868">
    <property type="entry name" value="RNase_P-MRP_p29"/>
    <property type="match status" value="1"/>
</dbReference>
<dbReference type="SMART" id="SM00538">
    <property type="entry name" value="POP4"/>
    <property type="match status" value="1"/>
</dbReference>
<dbReference type="SUPFAM" id="SSF101744">
    <property type="entry name" value="Rof/RNase P subunit-like"/>
    <property type="match status" value="1"/>
</dbReference>